<organism>
    <name type="scientific">Shewanella sediminis (strain HAW-EB3)</name>
    <dbReference type="NCBI Taxonomy" id="425104"/>
    <lineage>
        <taxon>Bacteria</taxon>
        <taxon>Pseudomonadati</taxon>
        <taxon>Pseudomonadota</taxon>
        <taxon>Gammaproteobacteria</taxon>
        <taxon>Alteromonadales</taxon>
        <taxon>Shewanellaceae</taxon>
        <taxon>Shewanella</taxon>
    </lineage>
</organism>
<sequence length="329" mass="35879">MQTLAQNLTSQGVNASLTQLIHTLANTSKEISHAVRHGALAGVLGATEQENVQGETQKKLDVITNDMLKDALKGDDTVRGLASEEEDYIVEVGDKGEYLVCFDPLDGSSNIDINSLVGTIFSVLPAPTGELSESSFLQAGRQQVAAGYVLYGPSTMLALTTGQGVQLFTLNPETNEYLLTTEAMSISKDTGEFAINMSNQRFWEAPMQTYISDLLLGTIGPREKAFNMRWIAAMVGDVHRVLSRGGIFTYPTDNKNPQKPYKLRLMYEANPMSFLVEQAGGKASTGYETIMDIQPSEIHQRVAVILGSANEVDACLNYHGLDYSEEPQL</sequence>
<evidence type="ECO:0000255" key="1">
    <source>
        <dbReference type="HAMAP-Rule" id="MF_01855"/>
    </source>
</evidence>
<reference key="1">
    <citation type="submission" date="2007-08" db="EMBL/GenBank/DDBJ databases">
        <title>Complete sequence of Shewanella sediminis HAW-EB3.</title>
        <authorList>
            <consortium name="US DOE Joint Genome Institute"/>
            <person name="Copeland A."/>
            <person name="Lucas S."/>
            <person name="Lapidus A."/>
            <person name="Barry K."/>
            <person name="Glavina del Rio T."/>
            <person name="Dalin E."/>
            <person name="Tice H."/>
            <person name="Pitluck S."/>
            <person name="Chertkov O."/>
            <person name="Brettin T."/>
            <person name="Bruce D."/>
            <person name="Detter J.C."/>
            <person name="Han C."/>
            <person name="Schmutz J."/>
            <person name="Larimer F."/>
            <person name="Land M."/>
            <person name="Hauser L."/>
            <person name="Kyrpides N."/>
            <person name="Kim E."/>
            <person name="Zhao J.-S."/>
            <person name="Richardson P."/>
        </authorList>
    </citation>
    <scope>NUCLEOTIDE SEQUENCE [LARGE SCALE GENOMIC DNA]</scope>
    <source>
        <strain>HAW-EB3</strain>
    </source>
</reference>
<keyword id="KW-0119">Carbohydrate metabolism</keyword>
<keyword id="KW-0963">Cytoplasm</keyword>
<keyword id="KW-0378">Hydrolase</keyword>
<keyword id="KW-0460">Magnesium</keyword>
<keyword id="KW-0479">Metal-binding</keyword>
<keyword id="KW-1185">Reference proteome</keyword>
<gene>
    <name evidence="1" type="primary">fbp</name>
    <name type="ordered locus">Ssed_0813</name>
</gene>
<protein>
    <recommendedName>
        <fullName evidence="1">Fructose-1,6-bisphosphatase class 1</fullName>
        <shortName evidence="1">FBPase class 1</shortName>
        <ecNumber evidence="1">3.1.3.11</ecNumber>
    </recommendedName>
    <alternativeName>
        <fullName evidence="1">D-fructose-1,6-bisphosphate 1-phosphohydrolase class 1</fullName>
    </alternativeName>
</protein>
<name>F16PA_SHESH</name>
<feature type="chain" id="PRO_0000364710" description="Fructose-1,6-bisphosphatase class 1">
    <location>
        <begin position="1"/>
        <end position="329"/>
    </location>
</feature>
<feature type="binding site" evidence="1">
    <location>
        <position position="84"/>
    </location>
    <ligand>
        <name>Mg(2+)</name>
        <dbReference type="ChEBI" id="CHEBI:18420"/>
        <label>1</label>
    </ligand>
</feature>
<feature type="binding site" evidence="1">
    <location>
        <position position="103"/>
    </location>
    <ligand>
        <name>Mg(2+)</name>
        <dbReference type="ChEBI" id="CHEBI:18420"/>
        <label>1</label>
    </ligand>
</feature>
<feature type="binding site" evidence="1">
    <location>
        <position position="103"/>
    </location>
    <ligand>
        <name>Mg(2+)</name>
        <dbReference type="ChEBI" id="CHEBI:18420"/>
        <label>2</label>
    </ligand>
</feature>
<feature type="binding site" evidence="1">
    <location>
        <position position="105"/>
    </location>
    <ligand>
        <name>Mg(2+)</name>
        <dbReference type="ChEBI" id="CHEBI:18420"/>
        <label>1</label>
    </ligand>
</feature>
<feature type="binding site" evidence="1">
    <location>
        <begin position="106"/>
        <end position="109"/>
    </location>
    <ligand>
        <name>substrate</name>
    </ligand>
</feature>
<feature type="binding site" evidence="1">
    <location>
        <position position="106"/>
    </location>
    <ligand>
        <name>Mg(2+)</name>
        <dbReference type="ChEBI" id="CHEBI:18420"/>
        <label>2</label>
    </ligand>
</feature>
<feature type="binding site" evidence="1">
    <location>
        <position position="196"/>
    </location>
    <ligand>
        <name>substrate</name>
    </ligand>
</feature>
<feature type="binding site" evidence="1">
    <location>
        <position position="262"/>
    </location>
    <ligand>
        <name>substrate</name>
    </ligand>
</feature>
<feature type="binding site" evidence="1">
    <location>
        <position position="268"/>
    </location>
    <ligand>
        <name>Mg(2+)</name>
        <dbReference type="ChEBI" id="CHEBI:18420"/>
        <label>2</label>
    </ligand>
</feature>
<comment type="catalytic activity">
    <reaction evidence="1">
        <text>beta-D-fructose 1,6-bisphosphate + H2O = beta-D-fructose 6-phosphate + phosphate</text>
        <dbReference type="Rhea" id="RHEA:11064"/>
        <dbReference type="ChEBI" id="CHEBI:15377"/>
        <dbReference type="ChEBI" id="CHEBI:32966"/>
        <dbReference type="ChEBI" id="CHEBI:43474"/>
        <dbReference type="ChEBI" id="CHEBI:57634"/>
        <dbReference type="EC" id="3.1.3.11"/>
    </reaction>
</comment>
<comment type="cofactor">
    <cofactor evidence="1">
        <name>Mg(2+)</name>
        <dbReference type="ChEBI" id="CHEBI:18420"/>
    </cofactor>
    <text evidence="1">Binds 2 magnesium ions per subunit.</text>
</comment>
<comment type="pathway">
    <text evidence="1">Carbohydrate biosynthesis; gluconeogenesis.</text>
</comment>
<comment type="subunit">
    <text evidence="1">Homotetramer.</text>
</comment>
<comment type="subcellular location">
    <subcellularLocation>
        <location evidence="1">Cytoplasm</location>
    </subcellularLocation>
</comment>
<comment type="similarity">
    <text evidence="1">Belongs to the FBPase class 1 family.</text>
</comment>
<dbReference type="EC" id="3.1.3.11" evidence="1"/>
<dbReference type="EMBL" id="CP000821">
    <property type="protein sequence ID" value="ABV35424.1"/>
    <property type="molecule type" value="Genomic_DNA"/>
</dbReference>
<dbReference type="RefSeq" id="WP_012141160.1">
    <property type="nucleotide sequence ID" value="NC_009831.1"/>
</dbReference>
<dbReference type="SMR" id="A8FRF1"/>
<dbReference type="STRING" id="425104.Ssed_0813"/>
<dbReference type="KEGG" id="sse:Ssed_0813"/>
<dbReference type="eggNOG" id="COG0158">
    <property type="taxonomic scope" value="Bacteria"/>
</dbReference>
<dbReference type="HOGENOM" id="CLU_039977_0_0_6"/>
<dbReference type="OrthoDB" id="9806756at2"/>
<dbReference type="UniPathway" id="UPA00138"/>
<dbReference type="Proteomes" id="UP000002015">
    <property type="component" value="Chromosome"/>
</dbReference>
<dbReference type="GO" id="GO:0005829">
    <property type="term" value="C:cytosol"/>
    <property type="evidence" value="ECO:0007669"/>
    <property type="project" value="TreeGrafter"/>
</dbReference>
<dbReference type="GO" id="GO:0042132">
    <property type="term" value="F:fructose 1,6-bisphosphate 1-phosphatase activity"/>
    <property type="evidence" value="ECO:0007669"/>
    <property type="project" value="UniProtKB-UniRule"/>
</dbReference>
<dbReference type="GO" id="GO:0000287">
    <property type="term" value="F:magnesium ion binding"/>
    <property type="evidence" value="ECO:0007669"/>
    <property type="project" value="UniProtKB-UniRule"/>
</dbReference>
<dbReference type="GO" id="GO:0030388">
    <property type="term" value="P:fructose 1,6-bisphosphate metabolic process"/>
    <property type="evidence" value="ECO:0007669"/>
    <property type="project" value="TreeGrafter"/>
</dbReference>
<dbReference type="GO" id="GO:0006002">
    <property type="term" value="P:fructose 6-phosphate metabolic process"/>
    <property type="evidence" value="ECO:0007669"/>
    <property type="project" value="TreeGrafter"/>
</dbReference>
<dbReference type="GO" id="GO:0006000">
    <property type="term" value="P:fructose metabolic process"/>
    <property type="evidence" value="ECO:0007669"/>
    <property type="project" value="TreeGrafter"/>
</dbReference>
<dbReference type="GO" id="GO:0006094">
    <property type="term" value="P:gluconeogenesis"/>
    <property type="evidence" value="ECO:0007669"/>
    <property type="project" value="UniProtKB-UniRule"/>
</dbReference>
<dbReference type="GO" id="GO:0005986">
    <property type="term" value="P:sucrose biosynthetic process"/>
    <property type="evidence" value="ECO:0007669"/>
    <property type="project" value="TreeGrafter"/>
</dbReference>
<dbReference type="CDD" id="cd00354">
    <property type="entry name" value="FBPase"/>
    <property type="match status" value="1"/>
</dbReference>
<dbReference type="FunFam" id="3.40.190.80:FF:000011">
    <property type="entry name" value="Fructose-1,6-bisphosphatase class 1"/>
    <property type="match status" value="1"/>
</dbReference>
<dbReference type="Gene3D" id="3.40.190.80">
    <property type="match status" value="1"/>
</dbReference>
<dbReference type="Gene3D" id="3.30.540.10">
    <property type="entry name" value="Fructose-1,6-Bisphosphatase, subunit A, domain 1"/>
    <property type="match status" value="1"/>
</dbReference>
<dbReference type="HAMAP" id="MF_01855">
    <property type="entry name" value="FBPase_class1"/>
    <property type="match status" value="1"/>
</dbReference>
<dbReference type="InterPro" id="IPR044015">
    <property type="entry name" value="FBPase_C_dom"/>
</dbReference>
<dbReference type="InterPro" id="IPR000146">
    <property type="entry name" value="FBPase_class-1"/>
</dbReference>
<dbReference type="InterPro" id="IPR033391">
    <property type="entry name" value="FBPase_N"/>
</dbReference>
<dbReference type="InterPro" id="IPR028343">
    <property type="entry name" value="FBPtase"/>
</dbReference>
<dbReference type="NCBIfam" id="NF006779">
    <property type="entry name" value="PRK09293.1-3"/>
    <property type="match status" value="1"/>
</dbReference>
<dbReference type="NCBIfam" id="NF006780">
    <property type="entry name" value="PRK09293.1-4"/>
    <property type="match status" value="1"/>
</dbReference>
<dbReference type="PANTHER" id="PTHR11556">
    <property type="entry name" value="FRUCTOSE-1,6-BISPHOSPHATASE-RELATED"/>
    <property type="match status" value="1"/>
</dbReference>
<dbReference type="PANTHER" id="PTHR11556:SF35">
    <property type="entry name" value="SEDOHEPTULOSE-1,7-BISPHOSPHATASE, CHLOROPLASTIC"/>
    <property type="match status" value="1"/>
</dbReference>
<dbReference type="Pfam" id="PF00316">
    <property type="entry name" value="FBPase"/>
    <property type="match status" value="1"/>
</dbReference>
<dbReference type="Pfam" id="PF18913">
    <property type="entry name" value="FBPase_C"/>
    <property type="match status" value="1"/>
</dbReference>
<dbReference type="PIRSF" id="PIRSF500210">
    <property type="entry name" value="FBPtase"/>
    <property type="match status" value="1"/>
</dbReference>
<dbReference type="PIRSF" id="PIRSF000904">
    <property type="entry name" value="FBPtase_SBPase"/>
    <property type="match status" value="1"/>
</dbReference>
<dbReference type="PRINTS" id="PR00115">
    <property type="entry name" value="F16BPHPHTASE"/>
</dbReference>
<dbReference type="SUPFAM" id="SSF56655">
    <property type="entry name" value="Carbohydrate phosphatase"/>
    <property type="match status" value="1"/>
</dbReference>
<accession>A8FRF1</accession>
<proteinExistence type="inferred from homology"/>